<sequence length="434" mass="47871">MDMMQFQRQTTQLAMTQRMQESLRILQMSNADLADYLTAQALENPCLEVRVPEGASVAPALPSRGIQAGLDRDAFATVEGQPPSLLAHVEAQIDLAFFDPGDRRTALAFAEALEPSGWLGQPVSEVAAAAEVEEEEALVILERLQALEPAGLFARSLAECLALQLEDLGLLTWELRTMLDHLPLLAEGRIADLARRCDCEPEHIRENLALIRSLSPKPGEAFAADRTPIQPPDVRVLRGPEGWEVELTRAQLPRIRVSEAGDTGDRQADAWLARARSQARWLERAVERRQATLLRTAVCLVRHQADFLDQGPRALRPLSMEEVALELDLHPSTISRATATRLIETPRGLIPLRAFFSRSVSSDGPEAPQSQDALMALVREIIAREDRTKPFSDDAIVKQAKLAGAVLARRTVTKYRETLGIPSSYDRKRAAAAA</sequence>
<reference key="1">
    <citation type="journal article" date="1992" name="J. Bacteriol.">
        <title>Isolation and characterization of the nifUSVW-rpoN gene cluster from Rhodobacter sphaeroides.</title>
        <authorList>
            <person name="Meijer W.G."/>
            <person name="Tabita F.R."/>
        </authorList>
    </citation>
    <scope>NUCLEOTIDE SEQUENCE [GENOMIC DNA]</scope>
</reference>
<proteinExistence type="inferred from homology"/>
<name>RP54_CERSP</name>
<evidence type="ECO:0000255" key="1"/>
<evidence type="ECO:0000305" key="2"/>
<comment type="function">
    <text>Sigma factors are initiation factors that promote the attachment of RNA polymerase to specific initiation sites and are then released. This sigma factor is responsible for the expression of the nitrogen fixation genes. The open complex (sigma-54 and core RNA polymerase) serves as the receptor for receipt of the melting signal from the remotely bound activator protein NifA for the expression of the nitrogen fixation proteins.</text>
</comment>
<comment type="similarity">
    <text evidence="2">Belongs to the sigma-54 factor family.</text>
</comment>
<accession>Q01194</accession>
<keyword id="KW-0238">DNA-binding</keyword>
<keyword id="KW-0240">DNA-directed RNA polymerase</keyword>
<keyword id="KW-0535">Nitrogen fixation</keyword>
<keyword id="KW-0548">Nucleotidyltransferase</keyword>
<keyword id="KW-0731">Sigma factor</keyword>
<keyword id="KW-0804">Transcription</keyword>
<keyword id="KW-0805">Transcription regulation</keyword>
<keyword id="KW-0808">Transferase</keyword>
<organism>
    <name type="scientific">Cereibacter sphaeroides</name>
    <name type="common">Rhodobacter sphaeroides</name>
    <dbReference type="NCBI Taxonomy" id="1063"/>
    <lineage>
        <taxon>Bacteria</taxon>
        <taxon>Pseudomonadati</taxon>
        <taxon>Pseudomonadota</taxon>
        <taxon>Alphaproteobacteria</taxon>
        <taxon>Rhodobacterales</taxon>
        <taxon>Paracoccaceae</taxon>
        <taxon>Cereibacter</taxon>
    </lineage>
</organism>
<feature type="chain" id="PRO_0000205542" description="RNA polymerase sigma-54 factor">
    <location>
        <begin position="1"/>
        <end position="434"/>
    </location>
</feature>
<feature type="DNA-binding region" description="H-T-H motif" evidence="1">
    <location>
        <begin position="319"/>
        <end position="338"/>
    </location>
</feature>
<feature type="short sequence motif" description="RPON box">
    <location>
        <begin position="408"/>
        <end position="416"/>
    </location>
</feature>
<protein>
    <recommendedName>
        <fullName>RNA polymerase sigma-54 factor</fullName>
    </recommendedName>
</protein>
<dbReference type="EMBL" id="M86823">
    <property type="protein sequence ID" value="AAA26134.1"/>
    <property type="molecule type" value="Genomic_DNA"/>
</dbReference>
<dbReference type="PIR" id="F41880">
    <property type="entry name" value="F41880"/>
</dbReference>
<dbReference type="RefSeq" id="WP_011338295.1">
    <property type="nucleotide sequence ID" value="NZ_WSNV01000150.1"/>
</dbReference>
<dbReference type="SMR" id="Q01194"/>
<dbReference type="GeneID" id="3718440"/>
<dbReference type="GO" id="GO:0000428">
    <property type="term" value="C:DNA-directed RNA polymerase complex"/>
    <property type="evidence" value="ECO:0007669"/>
    <property type="project" value="UniProtKB-KW"/>
</dbReference>
<dbReference type="GO" id="GO:0003677">
    <property type="term" value="F:DNA binding"/>
    <property type="evidence" value="ECO:0007669"/>
    <property type="project" value="UniProtKB-KW"/>
</dbReference>
<dbReference type="GO" id="GO:0001216">
    <property type="term" value="F:DNA-binding transcription activator activity"/>
    <property type="evidence" value="ECO:0007669"/>
    <property type="project" value="InterPro"/>
</dbReference>
<dbReference type="GO" id="GO:0016779">
    <property type="term" value="F:nucleotidyltransferase activity"/>
    <property type="evidence" value="ECO:0007669"/>
    <property type="project" value="UniProtKB-KW"/>
</dbReference>
<dbReference type="GO" id="GO:0016987">
    <property type="term" value="F:sigma factor activity"/>
    <property type="evidence" value="ECO:0007669"/>
    <property type="project" value="UniProtKB-KW"/>
</dbReference>
<dbReference type="GO" id="GO:0006352">
    <property type="term" value="P:DNA-templated transcription initiation"/>
    <property type="evidence" value="ECO:0007669"/>
    <property type="project" value="InterPro"/>
</dbReference>
<dbReference type="GO" id="GO:0009399">
    <property type="term" value="P:nitrogen fixation"/>
    <property type="evidence" value="ECO:0007669"/>
    <property type="project" value="UniProtKB-KW"/>
</dbReference>
<dbReference type="Gene3D" id="1.10.10.60">
    <property type="entry name" value="Homeodomain-like"/>
    <property type="match status" value="1"/>
</dbReference>
<dbReference type="Gene3D" id="1.10.10.1330">
    <property type="entry name" value="RNA polymerase sigma-54 factor, core-binding domain"/>
    <property type="match status" value="1"/>
</dbReference>
<dbReference type="InterPro" id="IPR000394">
    <property type="entry name" value="RNA_pol_sigma_54"/>
</dbReference>
<dbReference type="InterPro" id="IPR007046">
    <property type="entry name" value="RNA_pol_sigma_54_core-bd"/>
</dbReference>
<dbReference type="InterPro" id="IPR007634">
    <property type="entry name" value="RNA_pol_sigma_54_DNA-bd"/>
</dbReference>
<dbReference type="InterPro" id="IPR038709">
    <property type="entry name" value="RpoN_core-bd_sf"/>
</dbReference>
<dbReference type="NCBIfam" id="TIGR02395">
    <property type="entry name" value="rpoN_sigma"/>
    <property type="match status" value="1"/>
</dbReference>
<dbReference type="PANTHER" id="PTHR32248">
    <property type="entry name" value="RNA POLYMERASE SIGMA-54 FACTOR"/>
    <property type="match status" value="1"/>
</dbReference>
<dbReference type="PANTHER" id="PTHR32248:SF4">
    <property type="entry name" value="RNA POLYMERASE SIGMA-54 FACTOR"/>
    <property type="match status" value="1"/>
</dbReference>
<dbReference type="Pfam" id="PF00309">
    <property type="entry name" value="Sigma54_AID"/>
    <property type="match status" value="1"/>
</dbReference>
<dbReference type="Pfam" id="PF04963">
    <property type="entry name" value="Sigma54_CBD"/>
    <property type="match status" value="1"/>
</dbReference>
<dbReference type="Pfam" id="PF04552">
    <property type="entry name" value="Sigma54_DBD"/>
    <property type="match status" value="1"/>
</dbReference>
<dbReference type="PIRSF" id="PIRSF000774">
    <property type="entry name" value="RpoN"/>
    <property type="match status" value="1"/>
</dbReference>
<dbReference type="PRINTS" id="PR00045">
    <property type="entry name" value="SIGMA54FCT"/>
</dbReference>
<dbReference type="PROSITE" id="PS00717">
    <property type="entry name" value="SIGMA54_1"/>
    <property type="match status" value="1"/>
</dbReference>
<dbReference type="PROSITE" id="PS00718">
    <property type="entry name" value="SIGMA54_2"/>
    <property type="match status" value="1"/>
</dbReference>
<dbReference type="PROSITE" id="PS50044">
    <property type="entry name" value="SIGMA54_3"/>
    <property type="match status" value="1"/>
</dbReference>
<gene>
    <name type="primary">rpoN</name>
</gene>